<keyword id="KW-0028">Amino-acid biosynthesis</keyword>
<keyword id="KW-0057">Aromatic amino acid biosynthesis</keyword>
<keyword id="KW-0170">Cobalt</keyword>
<keyword id="KW-0963">Cytoplasm</keyword>
<keyword id="KW-0456">Lyase</keyword>
<keyword id="KW-0479">Metal-binding</keyword>
<keyword id="KW-0520">NAD</keyword>
<keyword id="KW-0547">Nucleotide-binding</keyword>
<keyword id="KW-0862">Zinc</keyword>
<gene>
    <name evidence="1" type="primary">aroB</name>
    <name type="ordered locus">ECIAI1_3527</name>
</gene>
<dbReference type="EC" id="4.2.3.4" evidence="1"/>
<dbReference type="EMBL" id="CU928160">
    <property type="protein sequence ID" value="CAR00328.1"/>
    <property type="molecule type" value="Genomic_DNA"/>
</dbReference>
<dbReference type="RefSeq" id="WP_000439846.1">
    <property type="nucleotide sequence ID" value="NC_011741.1"/>
</dbReference>
<dbReference type="SMR" id="B7M1U1"/>
<dbReference type="GeneID" id="93778609"/>
<dbReference type="KEGG" id="ecr:ECIAI1_3527"/>
<dbReference type="HOGENOM" id="CLU_001201_0_2_6"/>
<dbReference type="UniPathway" id="UPA00053">
    <property type="reaction ID" value="UER00085"/>
</dbReference>
<dbReference type="GO" id="GO:0005737">
    <property type="term" value="C:cytoplasm"/>
    <property type="evidence" value="ECO:0007669"/>
    <property type="project" value="UniProtKB-SubCell"/>
</dbReference>
<dbReference type="GO" id="GO:0003856">
    <property type="term" value="F:3-dehydroquinate synthase activity"/>
    <property type="evidence" value="ECO:0007669"/>
    <property type="project" value="UniProtKB-UniRule"/>
</dbReference>
<dbReference type="GO" id="GO:0046872">
    <property type="term" value="F:metal ion binding"/>
    <property type="evidence" value="ECO:0007669"/>
    <property type="project" value="UniProtKB-KW"/>
</dbReference>
<dbReference type="GO" id="GO:0000166">
    <property type="term" value="F:nucleotide binding"/>
    <property type="evidence" value="ECO:0007669"/>
    <property type="project" value="UniProtKB-KW"/>
</dbReference>
<dbReference type="GO" id="GO:0008652">
    <property type="term" value="P:amino acid biosynthetic process"/>
    <property type="evidence" value="ECO:0007669"/>
    <property type="project" value="UniProtKB-KW"/>
</dbReference>
<dbReference type="GO" id="GO:0009073">
    <property type="term" value="P:aromatic amino acid family biosynthetic process"/>
    <property type="evidence" value="ECO:0007669"/>
    <property type="project" value="UniProtKB-KW"/>
</dbReference>
<dbReference type="GO" id="GO:0009423">
    <property type="term" value="P:chorismate biosynthetic process"/>
    <property type="evidence" value="ECO:0007669"/>
    <property type="project" value="UniProtKB-UniRule"/>
</dbReference>
<dbReference type="CDD" id="cd08195">
    <property type="entry name" value="DHQS"/>
    <property type="match status" value="1"/>
</dbReference>
<dbReference type="FunFam" id="1.20.1090.10:FF:000002">
    <property type="entry name" value="3-dehydroquinate synthase"/>
    <property type="match status" value="1"/>
</dbReference>
<dbReference type="FunFam" id="3.40.50.1970:FF:000001">
    <property type="entry name" value="3-dehydroquinate synthase"/>
    <property type="match status" value="1"/>
</dbReference>
<dbReference type="Gene3D" id="3.40.50.1970">
    <property type="match status" value="1"/>
</dbReference>
<dbReference type="Gene3D" id="1.20.1090.10">
    <property type="entry name" value="Dehydroquinate synthase-like - alpha domain"/>
    <property type="match status" value="1"/>
</dbReference>
<dbReference type="HAMAP" id="MF_00110">
    <property type="entry name" value="DHQ_synthase"/>
    <property type="match status" value="1"/>
</dbReference>
<dbReference type="InterPro" id="IPR050071">
    <property type="entry name" value="Dehydroquinate_synthase"/>
</dbReference>
<dbReference type="InterPro" id="IPR016037">
    <property type="entry name" value="DHQ_synth_AroB"/>
</dbReference>
<dbReference type="InterPro" id="IPR030963">
    <property type="entry name" value="DHQ_synth_fam"/>
</dbReference>
<dbReference type="InterPro" id="IPR030960">
    <property type="entry name" value="DHQS/DOIS_N"/>
</dbReference>
<dbReference type="InterPro" id="IPR056179">
    <property type="entry name" value="DHQS_C"/>
</dbReference>
<dbReference type="NCBIfam" id="TIGR01357">
    <property type="entry name" value="aroB"/>
    <property type="match status" value="1"/>
</dbReference>
<dbReference type="PANTHER" id="PTHR43622">
    <property type="entry name" value="3-DEHYDROQUINATE SYNTHASE"/>
    <property type="match status" value="1"/>
</dbReference>
<dbReference type="PANTHER" id="PTHR43622:SF7">
    <property type="entry name" value="3-DEHYDROQUINATE SYNTHASE, CHLOROPLASTIC"/>
    <property type="match status" value="1"/>
</dbReference>
<dbReference type="Pfam" id="PF01761">
    <property type="entry name" value="DHQ_synthase"/>
    <property type="match status" value="1"/>
</dbReference>
<dbReference type="Pfam" id="PF24621">
    <property type="entry name" value="DHQS_C"/>
    <property type="match status" value="1"/>
</dbReference>
<dbReference type="PIRSF" id="PIRSF001455">
    <property type="entry name" value="DHQ_synth"/>
    <property type="match status" value="1"/>
</dbReference>
<dbReference type="SUPFAM" id="SSF56796">
    <property type="entry name" value="Dehydroquinate synthase-like"/>
    <property type="match status" value="1"/>
</dbReference>
<feature type="chain" id="PRO_1000117486" description="3-dehydroquinate synthase">
    <location>
        <begin position="1"/>
        <end position="362"/>
    </location>
</feature>
<feature type="binding site" evidence="1">
    <location>
        <begin position="71"/>
        <end position="76"/>
    </location>
    <ligand>
        <name>NAD(+)</name>
        <dbReference type="ChEBI" id="CHEBI:57540"/>
    </ligand>
</feature>
<feature type="binding site" evidence="1">
    <location>
        <begin position="105"/>
        <end position="109"/>
    </location>
    <ligand>
        <name>NAD(+)</name>
        <dbReference type="ChEBI" id="CHEBI:57540"/>
    </ligand>
</feature>
<feature type="binding site" evidence="1">
    <location>
        <begin position="129"/>
        <end position="130"/>
    </location>
    <ligand>
        <name>NAD(+)</name>
        <dbReference type="ChEBI" id="CHEBI:57540"/>
    </ligand>
</feature>
<feature type="binding site" evidence="1">
    <location>
        <position position="142"/>
    </location>
    <ligand>
        <name>NAD(+)</name>
        <dbReference type="ChEBI" id="CHEBI:57540"/>
    </ligand>
</feature>
<feature type="binding site" evidence="1">
    <location>
        <position position="151"/>
    </location>
    <ligand>
        <name>NAD(+)</name>
        <dbReference type="ChEBI" id="CHEBI:57540"/>
    </ligand>
</feature>
<feature type="binding site" evidence="1">
    <location>
        <begin position="169"/>
        <end position="172"/>
    </location>
    <ligand>
        <name>NAD(+)</name>
        <dbReference type="ChEBI" id="CHEBI:57540"/>
    </ligand>
</feature>
<feature type="binding site" evidence="1">
    <location>
        <position position="184"/>
    </location>
    <ligand>
        <name>Zn(2+)</name>
        <dbReference type="ChEBI" id="CHEBI:29105"/>
    </ligand>
</feature>
<feature type="binding site" evidence="1">
    <location>
        <position position="247"/>
    </location>
    <ligand>
        <name>Zn(2+)</name>
        <dbReference type="ChEBI" id="CHEBI:29105"/>
    </ligand>
</feature>
<feature type="binding site" evidence="1">
    <location>
        <position position="264"/>
    </location>
    <ligand>
        <name>Zn(2+)</name>
        <dbReference type="ChEBI" id="CHEBI:29105"/>
    </ligand>
</feature>
<proteinExistence type="inferred from homology"/>
<reference key="1">
    <citation type="journal article" date="2009" name="PLoS Genet.">
        <title>Organised genome dynamics in the Escherichia coli species results in highly diverse adaptive paths.</title>
        <authorList>
            <person name="Touchon M."/>
            <person name="Hoede C."/>
            <person name="Tenaillon O."/>
            <person name="Barbe V."/>
            <person name="Baeriswyl S."/>
            <person name="Bidet P."/>
            <person name="Bingen E."/>
            <person name="Bonacorsi S."/>
            <person name="Bouchier C."/>
            <person name="Bouvet O."/>
            <person name="Calteau A."/>
            <person name="Chiapello H."/>
            <person name="Clermont O."/>
            <person name="Cruveiller S."/>
            <person name="Danchin A."/>
            <person name="Diard M."/>
            <person name="Dossat C."/>
            <person name="Karoui M.E."/>
            <person name="Frapy E."/>
            <person name="Garry L."/>
            <person name="Ghigo J.M."/>
            <person name="Gilles A.M."/>
            <person name="Johnson J."/>
            <person name="Le Bouguenec C."/>
            <person name="Lescat M."/>
            <person name="Mangenot S."/>
            <person name="Martinez-Jehanne V."/>
            <person name="Matic I."/>
            <person name="Nassif X."/>
            <person name="Oztas S."/>
            <person name="Petit M.A."/>
            <person name="Pichon C."/>
            <person name="Rouy Z."/>
            <person name="Ruf C.S."/>
            <person name="Schneider D."/>
            <person name="Tourret J."/>
            <person name="Vacherie B."/>
            <person name="Vallenet D."/>
            <person name="Medigue C."/>
            <person name="Rocha E.P.C."/>
            <person name="Denamur E."/>
        </authorList>
    </citation>
    <scope>NUCLEOTIDE SEQUENCE [LARGE SCALE GENOMIC DNA]</scope>
    <source>
        <strain>IAI1</strain>
    </source>
</reference>
<evidence type="ECO:0000255" key="1">
    <source>
        <dbReference type="HAMAP-Rule" id="MF_00110"/>
    </source>
</evidence>
<accession>B7M1U1</accession>
<name>AROB_ECO8A</name>
<comment type="function">
    <text evidence="1">Catalyzes the conversion of 3-deoxy-D-arabino-heptulosonate 7-phosphate (DAHP) to dehydroquinate (DHQ).</text>
</comment>
<comment type="catalytic activity">
    <reaction evidence="1">
        <text>7-phospho-2-dehydro-3-deoxy-D-arabino-heptonate = 3-dehydroquinate + phosphate</text>
        <dbReference type="Rhea" id="RHEA:21968"/>
        <dbReference type="ChEBI" id="CHEBI:32364"/>
        <dbReference type="ChEBI" id="CHEBI:43474"/>
        <dbReference type="ChEBI" id="CHEBI:58394"/>
        <dbReference type="EC" id="4.2.3.4"/>
    </reaction>
</comment>
<comment type="cofactor">
    <cofactor evidence="1">
        <name>Co(2+)</name>
        <dbReference type="ChEBI" id="CHEBI:48828"/>
    </cofactor>
    <cofactor evidence="1">
        <name>Zn(2+)</name>
        <dbReference type="ChEBI" id="CHEBI:29105"/>
    </cofactor>
    <text evidence="1">Binds 1 divalent metal cation per subunit. Can use either Co(2+) or Zn(2+).</text>
</comment>
<comment type="cofactor">
    <cofactor evidence="1">
        <name>NAD(+)</name>
        <dbReference type="ChEBI" id="CHEBI:57540"/>
    </cofactor>
</comment>
<comment type="pathway">
    <text evidence="1">Metabolic intermediate biosynthesis; chorismate biosynthesis; chorismate from D-erythrose 4-phosphate and phosphoenolpyruvate: step 2/7.</text>
</comment>
<comment type="subcellular location">
    <subcellularLocation>
        <location evidence="1">Cytoplasm</location>
    </subcellularLocation>
</comment>
<comment type="similarity">
    <text evidence="1">Belongs to the sugar phosphate cyclases superfamily. Dehydroquinate synthase family.</text>
</comment>
<protein>
    <recommendedName>
        <fullName evidence="1">3-dehydroquinate synthase</fullName>
        <shortName evidence="1">DHQS</shortName>
        <ecNumber evidence="1">4.2.3.4</ecNumber>
    </recommendedName>
</protein>
<organism>
    <name type="scientific">Escherichia coli O8 (strain IAI1)</name>
    <dbReference type="NCBI Taxonomy" id="585034"/>
    <lineage>
        <taxon>Bacteria</taxon>
        <taxon>Pseudomonadati</taxon>
        <taxon>Pseudomonadota</taxon>
        <taxon>Gammaproteobacteria</taxon>
        <taxon>Enterobacterales</taxon>
        <taxon>Enterobacteriaceae</taxon>
        <taxon>Escherichia</taxon>
    </lineage>
</organism>
<sequence>MERIVVTLGERSYPITIASGLFNEPASFLPLKSGEQVMLVTNETLAPLYLDKVRGVLEQAGVNVDSVILPDGEQYKSLAVLDTVFTALLQKPHGRDTTLVALGGGVVGDLTGFAAASYQRGVRFIQVPTTLLSQVDSSVGGKTAVNHPLGKNMIGAFYQPASVVVDLDCLKTLPPRELASGLAEVIKYGIILDGAFFNWLEENLDALLRLDGPAMAYCIRRCCELKAEVVAADERETGLRALLNLGHTFGHAIEAEMGYGNWLHGEAVAAGMVMAARTSERLGQFSSAETQRIITLLKRAGLPVNGPREMSAQAYLPHMLRDKKVLAGEIRLILPLAIGKSEVRSGVSHELVLNAIADCQSA</sequence>